<sequence>MTKKYSLGFVGRKAGMSRVFTEDGRSVPVTLIEATPNRIAQIKTVEVDGYSAVQITVGARRAALVNKPAAGHFAKAKVEAGRGLWEFRVEDAQLGDFAVGGEIKADIFEVGQKVDVQGVTKGKGFQGTIKRYNFRMGDATHGNSLSHRAPGSLGQRQTPGRVFPGKKMSGHMGAVQQSTQNLEVVKVDVERGLIAIRGAVPGAAGGDVIVRPASKA</sequence>
<feature type="chain" id="PRO_0000241432" description="Large ribosomal subunit protein uL3">
    <location>
        <begin position="1"/>
        <end position="216"/>
    </location>
</feature>
<feature type="modified residue" description="N5-methylglutamine" evidence="1">
    <location>
        <position position="157"/>
    </location>
</feature>
<accession>Q4URD9</accession>
<reference key="1">
    <citation type="journal article" date="2005" name="Genome Res.">
        <title>Comparative and functional genomic analyses of the pathogenicity of phytopathogen Xanthomonas campestris pv. campestris.</title>
        <authorList>
            <person name="Qian W."/>
            <person name="Jia Y."/>
            <person name="Ren S.-X."/>
            <person name="He Y.-Q."/>
            <person name="Feng J.-X."/>
            <person name="Lu L.-F."/>
            <person name="Sun Q."/>
            <person name="Ying G."/>
            <person name="Tang D.-J."/>
            <person name="Tang H."/>
            <person name="Wu W."/>
            <person name="Hao P."/>
            <person name="Wang L."/>
            <person name="Jiang B.-L."/>
            <person name="Zeng S."/>
            <person name="Gu W.-Y."/>
            <person name="Lu G."/>
            <person name="Rong L."/>
            <person name="Tian Y."/>
            <person name="Yao Z."/>
            <person name="Fu G."/>
            <person name="Chen B."/>
            <person name="Fang R."/>
            <person name="Qiang B."/>
            <person name="Chen Z."/>
            <person name="Zhao G.-P."/>
            <person name="Tang J.-L."/>
            <person name="He C."/>
        </authorList>
    </citation>
    <scope>NUCLEOTIDE SEQUENCE [LARGE SCALE GENOMIC DNA]</scope>
    <source>
        <strain>8004</strain>
    </source>
</reference>
<name>RL3_XANC8</name>
<keyword id="KW-0488">Methylation</keyword>
<keyword id="KW-0687">Ribonucleoprotein</keyword>
<keyword id="KW-0689">Ribosomal protein</keyword>
<keyword id="KW-0694">RNA-binding</keyword>
<keyword id="KW-0699">rRNA-binding</keyword>
<gene>
    <name evidence="1" type="primary">rplC</name>
    <name type="ordered locus">XC_3340</name>
</gene>
<evidence type="ECO:0000255" key="1">
    <source>
        <dbReference type="HAMAP-Rule" id="MF_01325"/>
    </source>
</evidence>
<evidence type="ECO:0000305" key="2"/>
<proteinExistence type="inferred from homology"/>
<comment type="function">
    <text evidence="1">One of the primary rRNA binding proteins, it binds directly near the 3'-end of the 23S rRNA, where it nucleates assembly of the 50S subunit.</text>
</comment>
<comment type="subunit">
    <text evidence="1">Part of the 50S ribosomal subunit. Forms a cluster with proteins L14 and L19.</text>
</comment>
<comment type="PTM">
    <text evidence="1">Methylated by PrmB.</text>
</comment>
<comment type="similarity">
    <text evidence="1">Belongs to the universal ribosomal protein uL3 family.</text>
</comment>
<dbReference type="EMBL" id="CP000050">
    <property type="protein sequence ID" value="AAY50384.1"/>
    <property type="molecule type" value="Genomic_DNA"/>
</dbReference>
<dbReference type="RefSeq" id="WP_011036123.1">
    <property type="nucleotide sequence ID" value="NZ_CP155948.1"/>
</dbReference>
<dbReference type="SMR" id="Q4URD9"/>
<dbReference type="GeneID" id="97210504"/>
<dbReference type="KEGG" id="xcb:XC_3340"/>
<dbReference type="HOGENOM" id="CLU_044142_4_1_6"/>
<dbReference type="Proteomes" id="UP000000420">
    <property type="component" value="Chromosome"/>
</dbReference>
<dbReference type="GO" id="GO:0022625">
    <property type="term" value="C:cytosolic large ribosomal subunit"/>
    <property type="evidence" value="ECO:0007669"/>
    <property type="project" value="TreeGrafter"/>
</dbReference>
<dbReference type="GO" id="GO:0019843">
    <property type="term" value="F:rRNA binding"/>
    <property type="evidence" value="ECO:0007669"/>
    <property type="project" value="UniProtKB-UniRule"/>
</dbReference>
<dbReference type="GO" id="GO:0003735">
    <property type="term" value="F:structural constituent of ribosome"/>
    <property type="evidence" value="ECO:0007669"/>
    <property type="project" value="InterPro"/>
</dbReference>
<dbReference type="GO" id="GO:0006412">
    <property type="term" value="P:translation"/>
    <property type="evidence" value="ECO:0007669"/>
    <property type="project" value="UniProtKB-UniRule"/>
</dbReference>
<dbReference type="FunFam" id="2.40.30.10:FF:000004">
    <property type="entry name" value="50S ribosomal protein L3"/>
    <property type="match status" value="1"/>
</dbReference>
<dbReference type="FunFam" id="3.30.160.810:FF:000001">
    <property type="entry name" value="50S ribosomal protein L3"/>
    <property type="match status" value="1"/>
</dbReference>
<dbReference type="Gene3D" id="3.30.160.810">
    <property type="match status" value="1"/>
</dbReference>
<dbReference type="Gene3D" id="2.40.30.10">
    <property type="entry name" value="Translation factors"/>
    <property type="match status" value="1"/>
</dbReference>
<dbReference type="HAMAP" id="MF_01325_B">
    <property type="entry name" value="Ribosomal_uL3_B"/>
    <property type="match status" value="1"/>
</dbReference>
<dbReference type="InterPro" id="IPR000597">
    <property type="entry name" value="Ribosomal_uL3"/>
</dbReference>
<dbReference type="InterPro" id="IPR019927">
    <property type="entry name" value="Ribosomal_uL3_bac/org-type"/>
</dbReference>
<dbReference type="InterPro" id="IPR019926">
    <property type="entry name" value="Ribosomal_uL3_CS"/>
</dbReference>
<dbReference type="InterPro" id="IPR009000">
    <property type="entry name" value="Transl_B-barrel_sf"/>
</dbReference>
<dbReference type="NCBIfam" id="TIGR03625">
    <property type="entry name" value="L3_bact"/>
    <property type="match status" value="1"/>
</dbReference>
<dbReference type="PANTHER" id="PTHR11229">
    <property type="entry name" value="50S RIBOSOMAL PROTEIN L3"/>
    <property type="match status" value="1"/>
</dbReference>
<dbReference type="PANTHER" id="PTHR11229:SF16">
    <property type="entry name" value="LARGE RIBOSOMAL SUBUNIT PROTEIN UL3C"/>
    <property type="match status" value="1"/>
</dbReference>
<dbReference type="Pfam" id="PF00297">
    <property type="entry name" value="Ribosomal_L3"/>
    <property type="match status" value="1"/>
</dbReference>
<dbReference type="SUPFAM" id="SSF50447">
    <property type="entry name" value="Translation proteins"/>
    <property type="match status" value="1"/>
</dbReference>
<dbReference type="PROSITE" id="PS00474">
    <property type="entry name" value="RIBOSOMAL_L3"/>
    <property type="match status" value="1"/>
</dbReference>
<organism>
    <name type="scientific">Xanthomonas campestris pv. campestris (strain 8004)</name>
    <dbReference type="NCBI Taxonomy" id="314565"/>
    <lineage>
        <taxon>Bacteria</taxon>
        <taxon>Pseudomonadati</taxon>
        <taxon>Pseudomonadota</taxon>
        <taxon>Gammaproteobacteria</taxon>
        <taxon>Lysobacterales</taxon>
        <taxon>Lysobacteraceae</taxon>
        <taxon>Xanthomonas</taxon>
    </lineage>
</organism>
<protein>
    <recommendedName>
        <fullName evidence="1">Large ribosomal subunit protein uL3</fullName>
    </recommendedName>
    <alternativeName>
        <fullName evidence="2">50S ribosomal protein L3</fullName>
    </alternativeName>
</protein>